<reference key="1">
    <citation type="journal article" date="2004" name="Matrix Biol.">
        <title>Characterization of the human secreted phosphoprotein 24 gene (SPP2) and comparison of the protein sequence in nine species.</title>
        <authorList>
            <person name="Bennett C.S."/>
            <person name="Khorram Khorshid H.R."/>
            <person name="Kitchen J.A."/>
            <person name="Arteta D."/>
            <person name="Dalgleish R."/>
        </authorList>
    </citation>
    <scope>NUCLEOTIDE SEQUENCE [MRNA]</scope>
    <source>
        <strain>Mowi</strain>
        <tissue>Liver</tissue>
    </source>
</reference>
<organism>
    <name type="scientific">Salmo salar</name>
    <name type="common">Atlantic salmon</name>
    <dbReference type="NCBI Taxonomy" id="8030"/>
    <lineage>
        <taxon>Eukaryota</taxon>
        <taxon>Metazoa</taxon>
        <taxon>Chordata</taxon>
        <taxon>Craniata</taxon>
        <taxon>Vertebrata</taxon>
        <taxon>Euteleostomi</taxon>
        <taxon>Actinopterygii</taxon>
        <taxon>Neopterygii</taxon>
        <taxon>Teleostei</taxon>
        <taxon>Protacanthopterygii</taxon>
        <taxon>Salmoniformes</taxon>
        <taxon>Salmonidae</taxon>
        <taxon>Salmoninae</taxon>
        <taxon>Salmo</taxon>
    </lineage>
</organism>
<accession>Q710A1</accession>
<name>SPP24_SALSA</name>
<feature type="signal peptide" evidence="2">
    <location>
        <begin position="1"/>
        <end position="19"/>
    </location>
</feature>
<feature type="chain" id="PRO_0000228613" description="Secreted phosphoprotein 24">
    <location>
        <begin position="20"/>
        <end position="196"/>
    </location>
</feature>
<feature type="region of interest" description="Disordered" evidence="3">
    <location>
        <begin position="125"/>
        <end position="196"/>
    </location>
</feature>
<feature type="compositionally biased region" description="Low complexity" evidence="3">
    <location>
        <begin position="129"/>
        <end position="138"/>
    </location>
</feature>
<feature type="disulfide bond" evidence="1">
    <location>
        <begin position="83"/>
        <end position="94"/>
    </location>
</feature>
<feature type="disulfide bond" evidence="1">
    <location>
        <begin position="107"/>
        <end position="125"/>
    </location>
</feature>
<keyword id="KW-1015">Disulfide bond</keyword>
<keyword id="KW-0597">Phosphoprotein</keyword>
<keyword id="KW-1185">Reference proteome</keyword>
<keyword id="KW-0964">Secreted</keyword>
<keyword id="KW-0732">Signal</keyword>
<evidence type="ECO:0000250" key="1"/>
<evidence type="ECO:0000255" key="2"/>
<evidence type="ECO:0000256" key="3">
    <source>
        <dbReference type="SAM" id="MobiDB-lite"/>
    </source>
</evidence>
<evidence type="ECO:0000305" key="4"/>
<proteinExistence type="evidence at transcript level"/>
<comment type="function">
    <text evidence="1">Could coordinate an aspect of bone turnover.</text>
</comment>
<comment type="subcellular location">
    <subcellularLocation>
        <location evidence="1">Secreted</location>
    </subcellularLocation>
</comment>
<comment type="PTM">
    <text evidence="1">Multiply phosphorylated at serine residues.</text>
</comment>
<comment type="similarity">
    <text evidence="4">Belongs to the SPP2 family.</text>
</comment>
<sequence length="196" mass="21560">MKWCGVLMVALLQSLCCSGLPLYQSELASTADKALVVTMTQVNNLYAGLRLYRVSRGSIKRVVPLGLNTYDLIMNFGIKETDCLKSSGEDPQRCAFRVGFFVPAASCTARVRVTAEFTQVVSLNCGQDSSSSESSSEENFTRKRQQLNVQPFGNRGPVLPVPGFSEATRFPSHSFSRQEVEPQPIPRGDSFGNHLE</sequence>
<dbReference type="EMBL" id="AJ428527">
    <property type="protein sequence ID" value="CAD21625.1"/>
    <property type="molecule type" value="mRNA"/>
</dbReference>
<dbReference type="RefSeq" id="NP_001117023.1">
    <property type="nucleotide sequence ID" value="NM_001123551.1"/>
</dbReference>
<dbReference type="SMR" id="Q710A1"/>
<dbReference type="STRING" id="8030.ENSSSAP00000012195"/>
<dbReference type="PaxDb" id="8030-ENSSSAP00000012195"/>
<dbReference type="GeneID" id="100136400"/>
<dbReference type="KEGG" id="sasa:100136400"/>
<dbReference type="CTD" id="6694"/>
<dbReference type="OrthoDB" id="544379at7898"/>
<dbReference type="Proteomes" id="UP000087266">
    <property type="component" value="Chromosome ssa17"/>
</dbReference>
<dbReference type="Bgee" id="ENSSSAG00000006012">
    <property type="expression patterns" value="Expressed in heart and 24 other cell types or tissues"/>
</dbReference>
<dbReference type="GO" id="GO:0005576">
    <property type="term" value="C:extracellular region"/>
    <property type="evidence" value="ECO:0007669"/>
    <property type="project" value="UniProtKB-SubCell"/>
</dbReference>
<dbReference type="GO" id="GO:0046849">
    <property type="term" value="P:bone remodeling"/>
    <property type="evidence" value="ECO:0007669"/>
    <property type="project" value="InterPro"/>
</dbReference>
<dbReference type="Gene3D" id="3.10.450.10">
    <property type="match status" value="1"/>
</dbReference>
<dbReference type="InterPro" id="IPR046350">
    <property type="entry name" value="Cystatin_sf"/>
</dbReference>
<dbReference type="InterPro" id="IPR010892">
    <property type="entry name" value="Spp-24"/>
</dbReference>
<dbReference type="PANTHER" id="PTHR15444">
    <property type="entry name" value="SECRETED PHOSPHOPROTEIN 24"/>
    <property type="match status" value="1"/>
</dbReference>
<dbReference type="PANTHER" id="PTHR15444:SF4">
    <property type="entry name" value="SECRETED PHOSPHOPROTEIN 24"/>
    <property type="match status" value="1"/>
</dbReference>
<dbReference type="Pfam" id="PF07448">
    <property type="entry name" value="Spp-24"/>
    <property type="match status" value="1"/>
</dbReference>
<dbReference type="SUPFAM" id="SSF54403">
    <property type="entry name" value="Cystatin/monellin"/>
    <property type="match status" value="1"/>
</dbReference>
<protein>
    <recommendedName>
        <fullName>Secreted phosphoprotein 24</fullName>
        <shortName>Spp-24</shortName>
    </recommendedName>
    <alternativeName>
        <fullName>Secreted phosphoprotein 2</fullName>
    </alternativeName>
</protein>
<gene>
    <name type="primary">spp2</name>
    <name type="synonym">spp24</name>
</gene>